<organism>
    <name type="scientific">Pseudomonas entomophila (strain L48)</name>
    <dbReference type="NCBI Taxonomy" id="384676"/>
    <lineage>
        <taxon>Bacteria</taxon>
        <taxon>Pseudomonadati</taxon>
        <taxon>Pseudomonadota</taxon>
        <taxon>Gammaproteobacteria</taxon>
        <taxon>Pseudomonadales</taxon>
        <taxon>Pseudomonadaceae</taxon>
        <taxon>Pseudomonas</taxon>
    </lineage>
</organism>
<protein>
    <recommendedName>
        <fullName evidence="1">Probable alpha-L-glutamate ligase</fullName>
        <ecNumber evidence="1">6.3.2.-</ecNumber>
    </recommendedName>
</protein>
<gene>
    <name evidence="1" type="primary">rimK</name>
    <name type="ordered locus">PSEEN0229</name>
</gene>
<reference key="1">
    <citation type="journal article" date="2006" name="Nat. Biotechnol.">
        <title>Complete genome sequence of the entomopathogenic and metabolically versatile soil bacterium Pseudomonas entomophila.</title>
        <authorList>
            <person name="Vodovar N."/>
            <person name="Vallenet D."/>
            <person name="Cruveiller S."/>
            <person name="Rouy Z."/>
            <person name="Barbe V."/>
            <person name="Acosta C."/>
            <person name="Cattolico L."/>
            <person name="Jubin C."/>
            <person name="Lajus A."/>
            <person name="Segurens B."/>
            <person name="Vacherie B."/>
            <person name="Wincker P."/>
            <person name="Weissenbach J."/>
            <person name="Lemaitre B."/>
            <person name="Medigue C."/>
            <person name="Boccard F."/>
        </authorList>
    </citation>
    <scope>NUCLEOTIDE SEQUENCE [LARGE SCALE GENOMIC DNA]</scope>
    <source>
        <strain>L48</strain>
    </source>
</reference>
<accession>Q1IGK6</accession>
<evidence type="ECO:0000255" key="1">
    <source>
        <dbReference type="HAMAP-Rule" id="MF_01552"/>
    </source>
</evidence>
<keyword id="KW-0067">ATP-binding</keyword>
<keyword id="KW-0436">Ligase</keyword>
<keyword id="KW-0460">Magnesium</keyword>
<keyword id="KW-0464">Manganese</keyword>
<keyword id="KW-0479">Metal-binding</keyword>
<keyword id="KW-0547">Nucleotide-binding</keyword>
<keyword id="KW-0648">Protein biosynthesis</keyword>
<comment type="cofactor">
    <cofactor evidence="1">
        <name>Mg(2+)</name>
        <dbReference type="ChEBI" id="CHEBI:18420"/>
    </cofactor>
    <cofactor evidence="1">
        <name>Mn(2+)</name>
        <dbReference type="ChEBI" id="CHEBI:29035"/>
    </cofactor>
    <text evidence="1">Binds 2 magnesium or manganese ions per subunit.</text>
</comment>
<comment type="similarity">
    <text evidence="1">Belongs to the RimK family.</text>
</comment>
<proteinExistence type="inferred from homology"/>
<dbReference type="EC" id="6.3.2.-" evidence="1"/>
<dbReference type="EMBL" id="CT573326">
    <property type="protein sequence ID" value="CAK13196.1"/>
    <property type="molecule type" value="Genomic_DNA"/>
</dbReference>
<dbReference type="RefSeq" id="WP_011531656.1">
    <property type="nucleotide sequence ID" value="NC_008027.1"/>
</dbReference>
<dbReference type="SMR" id="Q1IGK6"/>
<dbReference type="STRING" id="384676.PSEEN0229"/>
<dbReference type="GeneID" id="93675286"/>
<dbReference type="KEGG" id="pen:PSEEN0229"/>
<dbReference type="eggNOG" id="COG0189">
    <property type="taxonomic scope" value="Bacteria"/>
</dbReference>
<dbReference type="HOGENOM" id="CLU_054353_0_1_6"/>
<dbReference type="OrthoDB" id="3865600at2"/>
<dbReference type="Proteomes" id="UP000000658">
    <property type="component" value="Chromosome"/>
</dbReference>
<dbReference type="GO" id="GO:0005737">
    <property type="term" value="C:cytoplasm"/>
    <property type="evidence" value="ECO:0007669"/>
    <property type="project" value="TreeGrafter"/>
</dbReference>
<dbReference type="GO" id="GO:0005524">
    <property type="term" value="F:ATP binding"/>
    <property type="evidence" value="ECO:0007669"/>
    <property type="project" value="UniProtKB-UniRule"/>
</dbReference>
<dbReference type="GO" id="GO:0046872">
    <property type="term" value="F:metal ion binding"/>
    <property type="evidence" value="ECO:0007669"/>
    <property type="project" value="UniProtKB-KW"/>
</dbReference>
<dbReference type="GO" id="GO:0018169">
    <property type="term" value="F:ribosomal S6-glutamic acid ligase activity"/>
    <property type="evidence" value="ECO:0007669"/>
    <property type="project" value="TreeGrafter"/>
</dbReference>
<dbReference type="GO" id="GO:0036211">
    <property type="term" value="P:protein modification process"/>
    <property type="evidence" value="ECO:0007669"/>
    <property type="project" value="InterPro"/>
</dbReference>
<dbReference type="GO" id="GO:0009432">
    <property type="term" value="P:SOS response"/>
    <property type="evidence" value="ECO:0007669"/>
    <property type="project" value="TreeGrafter"/>
</dbReference>
<dbReference type="GO" id="GO:0006412">
    <property type="term" value="P:translation"/>
    <property type="evidence" value="ECO:0007669"/>
    <property type="project" value="UniProtKB-KW"/>
</dbReference>
<dbReference type="FunFam" id="3.40.50.20:FF:000004">
    <property type="entry name" value="Probable alpha-L-glutamate ligase"/>
    <property type="match status" value="1"/>
</dbReference>
<dbReference type="FunFam" id="3.30.1490.20:FF:000005">
    <property type="entry name" value="Probable alpha-L-glutamate ligase 1"/>
    <property type="match status" value="1"/>
</dbReference>
<dbReference type="FunFam" id="3.30.470.20:FF:000016">
    <property type="entry name" value="Ribosomal protein S6--L-glutamate ligase"/>
    <property type="match status" value="1"/>
</dbReference>
<dbReference type="Gene3D" id="3.40.50.20">
    <property type="match status" value="1"/>
</dbReference>
<dbReference type="Gene3D" id="3.30.1490.20">
    <property type="entry name" value="ATP-grasp fold, A domain"/>
    <property type="match status" value="1"/>
</dbReference>
<dbReference type="Gene3D" id="3.30.470.20">
    <property type="entry name" value="ATP-grasp fold, B domain"/>
    <property type="match status" value="1"/>
</dbReference>
<dbReference type="HAMAP" id="MF_01552">
    <property type="entry name" value="RimK"/>
    <property type="match status" value="1"/>
</dbReference>
<dbReference type="InterPro" id="IPR011761">
    <property type="entry name" value="ATP-grasp"/>
</dbReference>
<dbReference type="InterPro" id="IPR013651">
    <property type="entry name" value="ATP-grasp_RimK-type"/>
</dbReference>
<dbReference type="InterPro" id="IPR013815">
    <property type="entry name" value="ATP_grasp_subdomain_1"/>
</dbReference>
<dbReference type="InterPro" id="IPR023533">
    <property type="entry name" value="RimK"/>
</dbReference>
<dbReference type="InterPro" id="IPR041107">
    <property type="entry name" value="Rimk_N"/>
</dbReference>
<dbReference type="InterPro" id="IPR004666">
    <property type="entry name" value="Rp_bS6_RimK/Lys_biosynth_LsyX"/>
</dbReference>
<dbReference type="NCBIfam" id="NF007764">
    <property type="entry name" value="PRK10446.1"/>
    <property type="match status" value="1"/>
</dbReference>
<dbReference type="NCBIfam" id="TIGR00768">
    <property type="entry name" value="rimK_fam"/>
    <property type="match status" value="1"/>
</dbReference>
<dbReference type="PANTHER" id="PTHR21621:SF7">
    <property type="entry name" value="RIBOSOMAL PROTEIN BS6--L-GLUTAMATE LIGASE"/>
    <property type="match status" value="1"/>
</dbReference>
<dbReference type="PANTHER" id="PTHR21621">
    <property type="entry name" value="RIBOSOMAL PROTEIN S6 MODIFICATION PROTEIN"/>
    <property type="match status" value="1"/>
</dbReference>
<dbReference type="Pfam" id="PF08443">
    <property type="entry name" value="RimK"/>
    <property type="match status" value="1"/>
</dbReference>
<dbReference type="Pfam" id="PF18030">
    <property type="entry name" value="Rimk_N"/>
    <property type="match status" value="1"/>
</dbReference>
<dbReference type="SUPFAM" id="SSF56059">
    <property type="entry name" value="Glutathione synthetase ATP-binding domain-like"/>
    <property type="match status" value="1"/>
</dbReference>
<dbReference type="PROSITE" id="PS50975">
    <property type="entry name" value="ATP_GRASP"/>
    <property type="match status" value="1"/>
</dbReference>
<sequence length="301" mass="32650">MKIAVLSRNPRLYSTRRLVEAGTQRGHEVVVIDTLRAYMNIASHKPQIHYRGKPLEGFDAVIPRIGASVTFYGCAVLRQFEMMGVYPLNESVAIARSRDKLRSLQLLSRRGIGLPITGFAHSPDDIPDLIQMVNGAPLVIKVLEGTQGIGVVLCETTKAAESVIEAFMGLKQNIMVQEYIKEAGGADIRCFVVGDKVIASMKRQAKPGEFRSNLHRGGVASLIKITPEERMTAIRAAKVMGLSVAGVDILRSNHGPLVMEVNSSPGLEGIEVTTGKDVAGMIIEHLEKNSGPNQTRTKGKG</sequence>
<feature type="chain" id="PRO_1000068848" description="Probable alpha-L-glutamate ligase">
    <location>
        <begin position="1"/>
        <end position="301"/>
    </location>
</feature>
<feature type="domain" description="ATP-grasp" evidence="1">
    <location>
        <begin position="104"/>
        <end position="287"/>
    </location>
</feature>
<feature type="binding site" evidence="1">
    <location>
        <position position="141"/>
    </location>
    <ligand>
        <name>ATP</name>
        <dbReference type="ChEBI" id="CHEBI:30616"/>
    </ligand>
</feature>
<feature type="binding site" evidence="1">
    <location>
        <begin position="178"/>
        <end position="179"/>
    </location>
    <ligand>
        <name>ATP</name>
        <dbReference type="ChEBI" id="CHEBI:30616"/>
    </ligand>
</feature>
<feature type="binding site" evidence="1">
    <location>
        <position position="187"/>
    </location>
    <ligand>
        <name>ATP</name>
        <dbReference type="ChEBI" id="CHEBI:30616"/>
    </ligand>
</feature>
<feature type="binding site" evidence="1">
    <location>
        <begin position="211"/>
        <end position="213"/>
    </location>
    <ligand>
        <name>ATP</name>
        <dbReference type="ChEBI" id="CHEBI:30616"/>
    </ligand>
</feature>
<feature type="binding site" evidence="1">
    <location>
        <position position="248"/>
    </location>
    <ligand>
        <name>Mg(2+)</name>
        <dbReference type="ChEBI" id="CHEBI:18420"/>
        <label>1</label>
    </ligand>
</feature>
<feature type="binding site" evidence="1">
    <location>
        <position position="248"/>
    </location>
    <ligand>
        <name>Mn(2+)</name>
        <dbReference type="ChEBI" id="CHEBI:29035"/>
        <label>1</label>
    </ligand>
</feature>
<feature type="binding site" evidence="1">
    <location>
        <position position="260"/>
    </location>
    <ligand>
        <name>Mg(2+)</name>
        <dbReference type="ChEBI" id="CHEBI:18420"/>
        <label>1</label>
    </ligand>
</feature>
<feature type="binding site" evidence="1">
    <location>
        <position position="260"/>
    </location>
    <ligand>
        <name>Mg(2+)</name>
        <dbReference type="ChEBI" id="CHEBI:18420"/>
        <label>2</label>
    </ligand>
</feature>
<feature type="binding site" evidence="1">
    <location>
        <position position="260"/>
    </location>
    <ligand>
        <name>Mn(2+)</name>
        <dbReference type="ChEBI" id="CHEBI:29035"/>
        <label>1</label>
    </ligand>
</feature>
<feature type="binding site" evidence="1">
    <location>
        <position position="260"/>
    </location>
    <ligand>
        <name>Mn(2+)</name>
        <dbReference type="ChEBI" id="CHEBI:29035"/>
        <label>2</label>
    </ligand>
</feature>
<feature type="binding site" evidence="1">
    <location>
        <position position="262"/>
    </location>
    <ligand>
        <name>Mg(2+)</name>
        <dbReference type="ChEBI" id="CHEBI:18420"/>
        <label>2</label>
    </ligand>
</feature>
<feature type="binding site" evidence="1">
    <location>
        <position position="262"/>
    </location>
    <ligand>
        <name>Mn(2+)</name>
        <dbReference type="ChEBI" id="CHEBI:29035"/>
        <label>2</label>
    </ligand>
</feature>
<name>RIMK_PSEE4</name>